<organism>
    <name type="scientific">Homo sapiens</name>
    <name type="common">Human</name>
    <dbReference type="NCBI Taxonomy" id="9606"/>
    <lineage>
        <taxon>Eukaryota</taxon>
        <taxon>Metazoa</taxon>
        <taxon>Chordata</taxon>
        <taxon>Craniata</taxon>
        <taxon>Vertebrata</taxon>
        <taxon>Euteleostomi</taxon>
        <taxon>Mammalia</taxon>
        <taxon>Eutheria</taxon>
        <taxon>Euarchontoglires</taxon>
        <taxon>Primates</taxon>
        <taxon>Haplorrhini</taxon>
        <taxon>Catarrhini</taxon>
        <taxon>Hominidae</taxon>
        <taxon>Homo</taxon>
    </lineage>
</organism>
<name>AKP8L_HUMAN</name>
<accession>Q9ULX6</accession>
<accession>B4DJ74</accession>
<accession>B5BU90</accession>
<accession>O94792</accession>
<accession>Q96J58</accession>
<accession>Q9NRQ0</accession>
<accession>Q9UGM0</accession>
<feature type="chain" id="PRO_0000075384" description="A-kinase anchor protein 8-like">
    <location>
        <begin position="1"/>
        <end position="646"/>
    </location>
</feature>
<feature type="zinc finger region" description="C2H2 AKAP95-type 1" evidence="2">
    <location>
        <begin position="391"/>
        <end position="413"/>
    </location>
</feature>
<feature type="zinc finger region" description="C2H2 AKAP95-type 2" evidence="2">
    <location>
        <begin position="484"/>
        <end position="507"/>
    </location>
</feature>
<feature type="region of interest" description="Sufficient for activation of CTE-mediated expression" evidence="9">
    <location>
        <begin position="1"/>
        <end position="268"/>
    </location>
</feature>
<feature type="region of interest" description="Disordered" evidence="3">
    <location>
        <begin position="264"/>
        <end position="381"/>
    </location>
</feature>
<feature type="region of interest" description="Disordered" evidence="3">
    <location>
        <begin position="545"/>
        <end position="646"/>
    </location>
</feature>
<feature type="short sequence motif" description="Nuclear localization signal" evidence="1">
    <location>
        <begin position="274"/>
        <end position="279"/>
    </location>
</feature>
<feature type="short sequence motif" description="Nuclear export signal (NES)" evidence="9">
    <location>
        <begin position="280"/>
        <end position="296"/>
    </location>
</feature>
<feature type="short sequence motif" description="Nuclear localization signal" evidence="1">
    <location>
        <begin position="362"/>
        <end position="364"/>
    </location>
</feature>
<feature type="compositionally biased region" description="Basic and acidic residues" evidence="3">
    <location>
        <begin position="287"/>
        <end position="296"/>
    </location>
</feature>
<feature type="compositionally biased region" description="Acidic residues" evidence="3">
    <location>
        <begin position="298"/>
        <end position="314"/>
    </location>
</feature>
<feature type="compositionally biased region" description="Basic and acidic residues" evidence="3">
    <location>
        <begin position="337"/>
        <end position="349"/>
    </location>
</feature>
<feature type="compositionally biased region" description="Acidic residues" evidence="3">
    <location>
        <begin position="552"/>
        <end position="563"/>
    </location>
</feature>
<feature type="compositionally biased region" description="Low complexity" evidence="3">
    <location>
        <begin position="564"/>
        <end position="586"/>
    </location>
</feature>
<feature type="compositionally biased region" description="Pro residues" evidence="3">
    <location>
        <begin position="587"/>
        <end position="607"/>
    </location>
</feature>
<feature type="compositionally biased region" description="Acidic residues" evidence="3">
    <location>
        <begin position="634"/>
        <end position="646"/>
    </location>
</feature>
<feature type="modified residue" description="Asymmetric dimethylarginine; alternate" evidence="26">
    <location>
        <position position="208"/>
    </location>
</feature>
<feature type="modified residue" description="Omega-N-methylarginine; alternate" evidence="26">
    <location>
        <position position="208"/>
    </location>
</feature>
<feature type="modified residue" description="Omega-N-methylarginine" evidence="26">
    <location>
        <position position="217"/>
    </location>
</feature>
<feature type="modified residue" description="Omega-N-methylarginine" evidence="26">
    <location>
        <position position="237"/>
    </location>
</feature>
<feature type="modified residue" description="Omega-N-methylarginine" evidence="26">
    <location>
        <position position="247"/>
    </location>
</feature>
<feature type="modified residue" description="N6-acetyllysine" evidence="23">
    <location>
        <position position="257"/>
    </location>
</feature>
<feature type="modified residue" description="Phosphothreonine" evidence="25">
    <location>
        <position position="267"/>
    </location>
</feature>
<feature type="modified residue" description="Phosphoserine" evidence="22 24">
    <location>
        <position position="283"/>
    </location>
</feature>
<feature type="modified residue" description="Phosphothreonine" evidence="21">
    <location>
        <position position="292"/>
    </location>
</feature>
<feature type="modified residue" description="Phosphoserine" evidence="21">
    <location>
        <position position="297"/>
    </location>
</feature>
<feature type="modified residue" description="Phosphoserine" evidence="25">
    <location>
        <position position="552"/>
    </location>
</feature>
<feature type="splice variant" id="VSP_044426" description="In isoform 2." evidence="18">
    <location>
        <begin position="61"/>
        <end position="121"/>
    </location>
</feature>
<feature type="sequence variant" id="VAR_068822" description="In dbSNP:rs2058322." evidence="4">
    <original>Q</original>
    <variation>H</variation>
    <location>
        <position position="458"/>
    </location>
</feature>
<feature type="sequence conflict" description="In Ref. 3; AAF86048." evidence="19" ref="3">
    <original>D</original>
    <variation>N</variation>
    <location>
        <position position="100"/>
    </location>
</feature>
<feature type="sequence conflict" description="In Ref. 3; AAF86048." evidence="19" ref="3">
    <original>S</original>
    <variation>N</variation>
    <location>
        <position position="189"/>
    </location>
</feature>
<feature type="sequence conflict" description="In Ref. 9; BAA34791." evidence="19" ref="9">
    <original>ALTTQDEN</original>
    <variation>EFSWGAWC</variation>
    <location>
        <begin position="351"/>
        <end position="358"/>
    </location>
</feature>
<feature type="sequence conflict" description="In Ref. 3; AAF86048." evidence="19" ref="3">
    <original>AVSPPPPPPPEEEEEGAV</original>
    <variation>GRVAATAAAPRRRRRRAPW</variation>
    <location>
        <begin position="599"/>
        <end position="616"/>
    </location>
</feature>
<feature type="sequence conflict" description="In Ref. 3; AAF86048." evidence="19" ref="3">
    <original>GGGGAP</original>
    <variation>EGRRGRPV</variation>
    <location>
        <begin position="641"/>
        <end position="646"/>
    </location>
</feature>
<keyword id="KW-0007">Acetylation</keyword>
<keyword id="KW-0025">Alternative splicing</keyword>
<keyword id="KW-0963">Cytoplasm</keyword>
<keyword id="KW-0945">Host-virus interaction</keyword>
<keyword id="KW-0479">Metal-binding</keyword>
<keyword id="KW-0488">Methylation</keyword>
<keyword id="KW-0507">mRNA processing</keyword>
<keyword id="KW-0508">mRNA splicing</keyword>
<keyword id="KW-0539">Nucleus</keyword>
<keyword id="KW-0597">Phosphoprotein</keyword>
<keyword id="KW-1267">Proteomics identification</keyword>
<keyword id="KW-1185">Reference proteome</keyword>
<keyword id="KW-0677">Repeat</keyword>
<keyword id="KW-0804">Transcription</keyword>
<keyword id="KW-0805">Transcription regulation</keyword>
<keyword id="KW-0862">Zinc</keyword>
<keyword id="KW-0863">Zinc-finger</keyword>
<proteinExistence type="evidence at protein level"/>
<dbReference type="EMBL" id="AB025905">
    <property type="protein sequence ID" value="BAA85003.1"/>
    <property type="molecule type" value="mRNA"/>
</dbReference>
<dbReference type="EMBL" id="AJ243467">
    <property type="protein sequence ID" value="CAB65092.1"/>
    <property type="molecule type" value="mRNA"/>
</dbReference>
<dbReference type="EMBL" id="AF199414">
    <property type="protein sequence ID" value="AAF86048.1"/>
    <property type="status" value="ALT_FRAME"/>
    <property type="molecule type" value="mRNA"/>
</dbReference>
<dbReference type="EMBL" id="AK295956">
    <property type="protein sequence ID" value="BAG58736.1"/>
    <property type="molecule type" value="mRNA"/>
</dbReference>
<dbReference type="EMBL" id="AB451326">
    <property type="protein sequence ID" value="BAG70140.1"/>
    <property type="molecule type" value="mRNA"/>
</dbReference>
<dbReference type="EMBL" id="AB451469">
    <property type="protein sequence ID" value="BAG70283.1"/>
    <property type="molecule type" value="mRNA"/>
</dbReference>
<dbReference type="EMBL" id="AC005785">
    <property type="status" value="NOT_ANNOTATED_CDS"/>
    <property type="molecule type" value="Genomic_DNA"/>
</dbReference>
<dbReference type="EMBL" id="AC006128">
    <property type="status" value="NOT_ANNOTATED_CDS"/>
    <property type="molecule type" value="Genomic_DNA"/>
</dbReference>
<dbReference type="EMBL" id="KF456508">
    <property type="status" value="NOT_ANNOTATED_CDS"/>
    <property type="molecule type" value="Genomic_DNA"/>
</dbReference>
<dbReference type="EMBL" id="KF456511">
    <property type="status" value="NOT_ANNOTATED_CDS"/>
    <property type="molecule type" value="Genomic_DNA"/>
</dbReference>
<dbReference type="EMBL" id="CH471106">
    <property type="protein sequence ID" value="EAW84475.1"/>
    <property type="molecule type" value="Genomic_DNA"/>
</dbReference>
<dbReference type="EMBL" id="BC000713">
    <property type="protein sequence ID" value="AAH00713.1"/>
    <property type="molecule type" value="mRNA"/>
</dbReference>
<dbReference type="EMBL" id="AB015332">
    <property type="protein sequence ID" value="BAA34791.1"/>
    <property type="status" value="ALT_INIT"/>
    <property type="molecule type" value="mRNA"/>
</dbReference>
<dbReference type="CCDS" id="CCDS46005.1">
    <molecule id="Q9ULX6-1"/>
</dbReference>
<dbReference type="CCDS" id="CCDS77249.1">
    <molecule id="Q9ULX6-2"/>
</dbReference>
<dbReference type="RefSeq" id="NP_001278407.1">
    <molecule id="Q9ULX6-2"/>
    <property type="nucleotide sequence ID" value="NM_001291478.2"/>
</dbReference>
<dbReference type="RefSeq" id="NP_055186.3">
    <molecule id="Q9ULX6-1"/>
    <property type="nucleotide sequence ID" value="NM_014371.3"/>
</dbReference>
<dbReference type="BioGRID" id="117940">
    <property type="interactions" value="252"/>
</dbReference>
<dbReference type="CORUM" id="Q9ULX6"/>
<dbReference type="DIP" id="DIP-27541N"/>
<dbReference type="FunCoup" id="Q9ULX6">
    <property type="interactions" value="2525"/>
</dbReference>
<dbReference type="IntAct" id="Q9ULX6">
    <property type="interactions" value="200"/>
</dbReference>
<dbReference type="MINT" id="Q9ULX6"/>
<dbReference type="STRING" id="9606.ENSP00000380557"/>
<dbReference type="GlyGen" id="Q9ULX6">
    <property type="glycosylation" value="1 site, 1 O-linked glycan (1 site)"/>
</dbReference>
<dbReference type="iPTMnet" id="Q9ULX6"/>
<dbReference type="PhosphoSitePlus" id="Q9ULX6"/>
<dbReference type="SwissPalm" id="Q9ULX6"/>
<dbReference type="BioMuta" id="AKAP8L"/>
<dbReference type="DMDM" id="296439446"/>
<dbReference type="jPOST" id="Q9ULX6"/>
<dbReference type="MassIVE" id="Q9ULX6"/>
<dbReference type="PaxDb" id="9606-ENSP00000380557"/>
<dbReference type="PeptideAtlas" id="Q9ULX6"/>
<dbReference type="ProteomicsDB" id="85148">
    <molecule id="Q9ULX6-1"/>
</dbReference>
<dbReference type="Pumba" id="Q9ULX6"/>
<dbReference type="Antibodypedia" id="7497">
    <property type="antibodies" value="200 antibodies from 26 providers"/>
</dbReference>
<dbReference type="DNASU" id="26993"/>
<dbReference type="Ensembl" id="ENST00000397410.10">
    <molecule id="Q9ULX6-1"/>
    <property type="protein sequence ID" value="ENSP00000380557.3"/>
    <property type="gene ID" value="ENSG00000011243.19"/>
</dbReference>
<dbReference type="Ensembl" id="ENST00000595465.6">
    <molecule id="Q9ULX6-2"/>
    <property type="protein sequence ID" value="ENSP00000470952.1"/>
    <property type="gene ID" value="ENSG00000011243.19"/>
</dbReference>
<dbReference type="GeneID" id="26993"/>
<dbReference type="KEGG" id="hsa:26993"/>
<dbReference type="MANE-Select" id="ENST00000397410.10">
    <property type="protein sequence ID" value="ENSP00000380557.3"/>
    <property type="RefSeq nucleotide sequence ID" value="NM_014371.4"/>
    <property type="RefSeq protein sequence ID" value="NP_055186.3"/>
</dbReference>
<dbReference type="UCSC" id="uc002naw.2">
    <molecule id="Q9ULX6-1"/>
    <property type="organism name" value="human"/>
</dbReference>
<dbReference type="AGR" id="HGNC:29857"/>
<dbReference type="CTD" id="26993"/>
<dbReference type="DisGeNET" id="26993"/>
<dbReference type="GeneCards" id="AKAP8L"/>
<dbReference type="HGNC" id="HGNC:29857">
    <property type="gene designation" value="AKAP8L"/>
</dbReference>
<dbReference type="HPA" id="ENSG00000011243">
    <property type="expression patterns" value="Low tissue specificity"/>
</dbReference>
<dbReference type="MIM" id="609475">
    <property type="type" value="gene"/>
</dbReference>
<dbReference type="neXtProt" id="NX_Q9ULX6"/>
<dbReference type="OpenTargets" id="ENSG00000011243"/>
<dbReference type="PharmGKB" id="PA134867364"/>
<dbReference type="VEuPathDB" id="HostDB:ENSG00000011243"/>
<dbReference type="eggNOG" id="ENOG502QSFC">
    <property type="taxonomic scope" value="Eukaryota"/>
</dbReference>
<dbReference type="GeneTree" id="ENSGT00530000063777"/>
<dbReference type="HOGENOM" id="CLU_024193_0_0_1"/>
<dbReference type="InParanoid" id="Q9ULX6"/>
<dbReference type="OMA" id="NMRESFT"/>
<dbReference type="OrthoDB" id="8923935at2759"/>
<dbReference type="PAN-GO" id="Q9ULX6">
    <property type="GO annotations" value="3 GO annotations based on evolutionary models"/>
</dbReference>
<dbReference type="PhylomeDB" id="Q9ULX6"/>
<dbReference type="TreeFam" id="TF105407"/>
<dbReference type="PathwayCommons" id="Q9ULX6"/>
<dbReference type="Reactome" id="R-HSA-9772755">
    <property type="pathway name" value="Formation of WDR5-containing histone-modifying complexes"/>
</dbReference>
<dbReference type="SignaLink" id="Q9ULX6"/>
<dbReference type="SIGNOR" id="Q9ULX6"/>
<dbReference type="BioGRID-ORCS" id="26993">
    <property type="hits" value="23 hits in 1166 CRISPR screens"/>
</dbReference>
<dbReference type="CD-CODE" id="1A18FFC4">
    <property type="entry name" value="Paraspeckle"/>
</dbReference>
<dbReference type="CD-CODE" id="804901D1">
    <property type="entry name" value="Nuclear speckle"/>
</dbReference>
<dbReference type="CD-CODE" id="B5B9A610">
    <property type="entry name" value="PML body"/>
</dbReference>
<dbReference type="CD-CODE" id="DEE660B4">
    <property type="entry name" value="Stress granule"/>
</dbReference>
<dbReference type="ChiTaRS" id="AKAP8L">
    <property type="organism name" value="human"/>
</dbReference>
<dbReference type="GeneWiki" id="AKAP8L"/>
<dbReference type="GenomeRNAi" id="26993"/>
<dbReference type="Pharos" id="Q9ULX6">
    <property type="development level" value="Tbio"/>
</dbReference>
<dbReference type="PRO" id="PR:Q9ULX6"/>
<dbReference type="Proteomes" id="UP000005640">
    <property type="component" value="Chromosome 19"/>
</dbReference>
<dbReference type="RNAct" id="Q9ULX6">
    <property type="molecule type" value="protein"/>
</dbReference>
<dbReference type="Bgee" id="ENSG00000011243">
    <property type="expression patterns" value="Expressed in right hemisphere of cerebellum and 193 other cell types or tissues"/>
</dbReference>
<dbReference type="ExpressionAtlas" id="Q9ULX6">
    <property type="expression patterns" value="baseline and differential"/>
</dbReference>
<dbReference type="GO" id="GO:0000785">
    <property type="term" value="C:chromatin"/>
    <property type="evidence" value="ECO:0000314"/>
    <property type="project" value="UniProtKB"/>
</dbReference>
<dbReference type="GO" id="GO:0005737">
    <property type="term" value="C:cytoplasm"/>
    <property type="evidence" value="ECO:0000314"/>
    <property type="project" value="UniProtKB"/>
</dbReference>
<dbReference type="GO" id="GO:0016363">
    <property type="term" value="C:nuclear matrix"/>
    <property type="evidence" value="ECO:0000314"/>
    <property type="project" value="UniProtKB"/>
</dbReference>
<dbReference type="GO" id="GO:0016607">
    <property type="term" value="C:nuclear speck"/>
    <property type="evidence" value="ECO:0000314"/>
    <property type="project" value="HPA"/>
</dbReference>
<dbReference type="GO" id="GO:0005654">
    <property type="term" value="C:nucleoplasm"/>
    <property type="evidence" value="ECO:0000304"/>
    <property type="project" value="Reactome"/>
</dbReference>
<dbReference type="GO" id="GO:0005634">
    <property type="term" value="C:nucleus"/>
    <property type="evidence" value="ECO:0000314"/>
    <property type="project" value="UniProtKB"/>
</dbReference>
<dbReference type="GO" id="GO:0016605">
    <property type="term" value="C:PML body"/>
    <property type="evidence" value="ECO:0007669"/>
    <property type="project" value="UniProtKB-SubCell"/>
</dbReference>
<dbReference type="GO" id="GO:1990904">
    <property type="term" value="C:ribonucleoprotein complex"/>
    <property type="evidence" value="ECO:0000314"/>
    <property type="project" value="UniProtKB"/>
</dbReference>
<dbReference type="GO" id="GO:0017151">
    <property type="term" value="F:DEAD/H-box RNA helicase binding"/>
    <property type="evidence" value="ECO:0000304"/>
    <property type="project" value="UniProtKB"/>
</dbReference>
<dbReference type="GO" id="GO:0003677">
    <property type="term" value="F:DNA binding"/>
    <property type="evidence" value="ECO:0007669"/>
    <property type="project" value="InterPro"/>
</dbReference>
<dbReference type="GO" id="GO:0042826">
    <property type="term" value="F:histone deacetylase binding"/>
    <property type="evidence" value="ECO:0000314"/>
    <property type="project" value="UniProtKB"/>
</dbReference>
<dbReference type="GO" id="GO:0005521">
    <property type="term" value="F:lamin binding"/>
    <property type="evidence" value="ECO:0000314"/>
    <property type="project" value="UniProtKB"/>
</dbReference>
<dbReference type="GO" id="GO:0034237">
    <property type="term" value="F:protein kinase A regulatory subunit binding"/>
    <property type="evidence" value="ECO:0000318"/>
    <property type="project" value="GO_Central"/>
</dbReference>
<dbReference type="GO" id="GO:0003723">
    <property type="term" value="F:RNA binding"/>
    <property type="evidence" value="ECO:0007005"/>
    <property type="project" value="UniProtKB"/>
</dbReference>
<dbReference type="GO" id="GO:0008270">
    <property type="term" value="F:zinc ion binding"/>
    <property type="evidence" value="ECO:0007669"/>
    <property type="project" value="UniProtKB-KW"/>
</dbReference>
<dbReference type="GO" id="GO:0044839">
    <property type="term" value="P:cell cycle G2/M phase transition"/>
    <property type="evidence" value="ECO:0000315"/>
    <property type="project" value="UniProtKB"/>
</dbReference>
<dbReference type="GO" id="GO:0007076">
    <property type="term" value="P:mitotic chromosome condensation"/>
    <property type="evidence" value="ECO:0000315"/>
    <property type="project" value="UniProtKB"/>
</dbReference>
<dbReference type="GO" id="GO:0006397">
    <property type="term" value="P:mRNA processing"/>
    <property type="evidence" value="ECO:0000314"/>
    <property type="project" value="UniProtKB"/>
</dbReference>
<dbReference type="GO" id="GO:0051081">
    <property type="term" value="P:nuclear membrane disassembly"/>
    <property type="evidence" value="ECO:0000315"/>
    <property type="project" value="UniProtKB"/>
</dbReference>
<dbReference type="GO" id="GO:0045944">
    <property type="term" value="P:positive regulation of transcription by RNA polymerase II"/>
    <property type="evidence" value="ECO:0000314"/>
    <property type="project" value="UniProtKB"/>
</dbReference>
<dbReference type="GO" id="GO:0010793">
    <property type="term" value="P:regulation of mRNA export from nucleus"/>
    <property type="evidence" value="ECO:0000314"/>
    <property type="project" value="UniProtKB"/>
</dbReference>
<dbReference type="GO" id="GO:0008380">
    <property type="term" value="P:RNA splicing"/>
    <property type="evidence" value="ECO:0007669"/>
    <property type="project" value="UniProtKB-KW"/>
</dbReference>
<dbReference type="InterPro" id="IPR007071">
    <property type="entry name" value="AKAP95"/>
</dbReference>
<dbReference type="InterPro" id="IPR034736">
    <property type="entry name" value="ZF_C2H2_AKAP95"/>
</dbReference>
<dbReference type="PANTHER" id="PTHR12190:SF4">
    <property type="entry name" value="A-KINASE ANCHOR PROTEIN 8-LIKE"/>
    <property type="match status" value="1"/>
</dbReference>
<dbReference type="PANTHER" id="PTHR12190">
    <property type="entry name" value="A-KINASE ANCHOR PROTEIN AKAP 8"/>
    <property type="match status" value="1"/>
</dbReference>
<dbReference type="Pfam" id="PF04988">
    <property type="entry name" value="AKAP95"/>
    <property type="match status" value="1"/>
</dbReference>
<dbReference type="PROSITE" id="PS51799">
    <property type="entry name" value="ZF_C2H2_AKAP95"/>
    <property type="match status" value="2"/>
</dbReference>
<reference key="1">
    <citation type="journal article" date="2000" name="J. Hum. Genet.">
        <title>cDNA cloning of a novel human gene NAKAP95, neighbor of A-kinase anchoring protein 95 (AKAP95) on chromosome 19p13.11-p13.12 region.</title>
        <authorList>
            <person name="Seki N."/>
            <person name="Ueki N."/>
            <person name="Yano K."/>
            <person name="Saito T."/>
            <person name="Masuho Y."/>
            <person name="Muramatsu M.-A."/>
        </authorList>
    </citation>
    <scope>NUCLEOTIDE SEQUENCE [MRNA] (ISOFORM 1)</scope>
    <scope>TISSUE SPECIFICITY</scope>
    <scope>VARIANT HIS-458</scope>
    <source>
        <tissue>Fetal brain</tissue>
    </source>
</reference>
<reference key="2">
    <citation type="journal article" date="2000" name="Biol. Cell">
        <title>Identification, cloning and characterization of a novel nuclear protein, HA95, homologous to A-kinase anchoring protein 95.</title>
        <authorList>
            <person name="Orstavik S."/>
            <person name="Eide T."/>
            <person name="Collas P."/>
            <person name="Han I.O."/>
            <person name="Tasken K."/>
            <person name="Kieff E."/>
            <person name="Jahnsen T."/>
            <person name="Skalhegg B.S."/>
        </authorList>
    </citation>
    <scope>NUCLEOTIDE SEQUENCE [MRNA] (ISOFORM 1)</scope>
    <scope>FUNCTION</scope>
    <scope>SUBCELLULAR LOCATION</scope>
</reference>
<reference key="3">
    <citation type="journal article" date="2000" name="J. Biol. Chem.">
        <title>A novel shuttle protein binds to RNA helicase A and activates the retroviral constitutive transport element.</title>
        <authorList>
            <person name="Westberg C."/>
            <person name="Yang J.-P."/>
            <person name="Tang H."/>
            <person name="Reddy T.R."/>
            <person name="Wong-Staal F."/>
        </authorList>
    </citation>
    <scope>NUCLEOTIDE SEQUENCE [MRNA] (ISOFORM 1)</scope>
    <scope>FUNCTION</scope>
    <scope>SUBCELLULAR LOCATION</scope>
    <scope>INTERACTION WITH DHX9</scope>
    <source>
        <tissue>Placenta</tissue>
        <tissue>T-cell lymphoma</tissue>
    </source>
</reference>
<reference key="4">
    <citation type="journal article" date="2004" name="Nat. Genet.">
        <title>Complete sequencing and characterization of 21,243 full-length human cDNAs.</title>
        <authorList>
            <person name="Ota T."/>
            <person name="Suzuki Y."/>
            <person name="Nishikawa T."/>
            <person name="Otsuki T."/>
            <person name="Sugiyama T."/>
            <person name="Irie R."/>
            <person name="Wakamatsu A."/>
            <person name="Hayashi K."/>
            <person name="Sato H."/>
            <person name="Nagai K."/>
            <person name="Kimura K."/>
            <person name="Makita H."/>
            <person name="Sekine M."/>
            <person name="Obayashi M."/>
            <person name="Nishi T."/>
            <person name="Shibahara T."/>
            <person name="Tanaka T."/>
            <person name="Ishii S."/>
            <person name="Yamamoto J."/>
            <person name="Saito K."/>
            <person name="Kawai Y."/>
            <person name="Isono Y."/>
            <person name="Nakamura Y."/>
            <person name="Nagahari K."/>
            <person name="Murakami K."/>
            <person name="Yasuda T."/>
            <person name="Iwayanagi T."/>
            <person name="Wagatsuma M."/>
            <person name="Shiratori A."/>
            <person name="Sudo H."/>
            <person name="Hosoiri T."/>
            <person name="Kaku Y."/>
            <person name="Kodaira H."/>
            <person name="Kondo H."/>
            <person name="Sugawara M."/>
            <person name="Takahashi M."/>
            <person name="Kanda K."/>
            <person name="Yokoi T."/>
            <person name="Furuya T."/>
            <person name="Kikkawa E."/>
            <person name="Omura Y."/>
            <person name="Abe K."/>
            <person name="Kamihara K."/>
            <person name="Katsuta N."/>
            <person name="Sato K."/>
            <person name="Tanikawa M."/>
            <person name="Yamazaki M."/>
            <person name="Ninomiya K."/>
            <person name="Ishibashi T."/>
            <person name="Yamashita H."/>
            <person name="Murakawa K."/>
            <person name="Fujimori K."/>
            <person name="Tanai H."/>
            <person name="Kimata M."/>
            <person name="Watanabe M."/>
            <person name="Hiraoka S."/>
            <person name="Chiba Y."/>
            <person name="Ishida S."/>
            <person name="Ono Y."/>
            <person name="Takiguchi S."/>
            <person name="Watanabe S."/>
            <person name="Yosida M."/>
            <person name="Hotuta T."/>
            <person name="Kusano J."/>
            <person name="Kanehori K."/>
            <person name="Takahashi-Fujii A."/>
            <person name="Hara H."/>
            <person name="Tanase T.-O."/>
            <person name="Nomura Y."/>
            <person name="Togiya S."/>
            <person name="Komai F."/>
            <person name="Hara R."/>
            <person name="Takeuchi K."/>
            <person name="Arita M."/>
            <person name="Imose N."/>
            <person name="Musashino K."/>
            <person name="Yuuki H."/>
            <person name="Oshima A."/>
            <person name="Sasaki N."/>
            <person name="Aotsuka S."/>
            <person name="Yoshikawa Y."/>
            <person name="Matsunawa H."/>
            <person name="Ichihara T."/>
            <person name="Shiohata N."/>
            <person name="Sano S."/>
            <person name="Moriya S."/>
            <person name="Momiyama H."/>
            <person name="Satoh N."/>
            <person name="Takami S."/>
            <person name="Terashima Y."/>
            <person name="Suzuki O."/>
            <person name="Nakagawa S."/>
            <person name="Senoh A."/>
            <person name="Mizoguchi H."/>
            <person name="Goto Y."/>
            <person name="Shimizu F."/>
            <person name="Wakebe H."/>
            <person name="Hishigaki H."/>
            <person name="Watanabe T."/>
            <person name="Sugiyama A."/>
            <person name="Takemoto M."/>
            <person name="Kawakami B."/>
            <person name="Yamazaki M."/>
            <person name="Watanabe K."/>
            <person name="Kumagai A."/>
            <person name="Itakura S."/>
            <person name="Fukuzumi Y."/>
            <person name="Fujimori Y."/>
            <person name="Komiyama M."/>
            <person name="Tashiro H."/>
            <person name="Tanigami A."/>
            <person name="Fujiwara T."/>
            <person name="Ono T."/>
            <person name="Yamada K."/>
            <person name="Fujii Y."/>
            <person name="Ozaki K."/>
            <person name="Hirao M."/>
            <person name="Ohmori Y."/>
            <person name="Kawabata A."/>
            <person name="Hikiji T."/>
            <person name="Kobatake N."/>
            <person name="Inagaki H."/>
            <person name="Ikema Y."/>
            <person name="Okamoto S."/>
            <person name="Okitani R."/>
            <person name="Kawakami T."/>
            <person name="Noguchi S."/>
            <person name="Itoh T."/>
            <person name="Shigeta K."/>
            <person name="Senba T."/>
            <person name="Matsumura K."/>
            <person name="Nakajima Y."/>
            <person name="Mizuno T."/>
            <person name="Morinaga M."/>
            <person name="Sasaki M."/>
            <person name="Togashi T."/>
            <person name="Oyama M."/>
            <person name="Hata H."/>
            <person name="Watanabe M."/>
            <person name="Komatsu T."/>
            <person name="Mizushima-Sugano J."/>
            <person name="Satoh T."/>
            <person name="Shirai Y."/>
            <person name="Takahashi Y."/>
            <person name="Nakagawa K."/>
            <person name="Okumura K."/>
            <person name="Nagase T."/>
            <person name="Nomura N."/>
            <person name="Kikuchi H."/>
            <person name="Masuho Y."/>
            <person name="Yamashita R."/>
            <person name="Nakai K."/>
            <person name="Yada T."/>
            <person name="Nakamura Y."/>
            <person name="Ohara O."/>
            <person name="Isogai T."/>
            <person name="Sugano S."/>
        </authorList>
    </citation>
    <scope>NUCLEOTIDE SEQUENCE [LARGE SCALE MRNA] (ISOFORM 2)</scope>
    <source>
        <tissue>Substantia nigra</tissue>
    </source>
</reference>
<reference key="5">
    <citation type="journal article" date="2008" name="Nat. Methods">
        <title>Human protein factory for converting the transcriptome into an in vitro-expressed proteome.</title>
        <authorList>
            <person name="Goshima N."/>
            <person name="Kawamura Y."/>
            <person name="Fukumoto A."/>
            <person name="Miura A."/>
            <person name="Honma R."/>
            <person name="Satoh R."/>
            <person name="Wakamatsu A."/>
            <person name="Yamamoto J."/>
            <person name="Kimura K."/>
            <person name="Nishikawa T."/>
            <person name="Andoh T."/>
            <person name="Iida Y."/>
            <person name="Ishikawa K."/>
            <person name="Ito E."/>
            <person name="Kagawa N."/>
            <person name="Kaminaga C."/>
            <person name="Kanehori K."/>
            <person name="Kawakami B."/>
            <person name="Kenmochi K."/>
            <person name="Kimura R."/>
            <person name="Kobayashi M."/>
            <person name="Kuroita T."/>
            <person name="Kuwayama H."/>
            <person name="Maruyama Y."/>
            <person name="Matsuo K."/>
            <person name="Minami K."/>
            <person name="Mitsubori M."/>
            <person name="Mori M."/>
            <person name="Morishita R."/>
            <person name="Murase A."/>
            <person name="Nishikawa A."/>
            <person name="Nishikawa S."/>
            <person name="Okamoto T."/>
            <person name="Sakagami N."/>
            <person name="Sakamoto Y."/>
            <person name="Sasaki Y."/>
            <person name="Seki T."/>
            <person name="Sono S."/>
            <person name="Sugiyama A."/>
            <person name="Sumiya T."/>
            <person name="Takayama T."/>
            <person name="Takayama Y."/>
            <person name="Takeda H."/>
            <person name="Togashi T."/>
            <person name="Yahata K."/>
            <person name="Yamada H."/>
            <person name="Yanagisawa Y."/>
            <person name="Endo Y."/>
            <person name="Imamoto F."/>
            <person name="Kisu Y."/>
            <person name="Tanaka S."/>
            <person name="Isogai T."/>
            <person name="Imai J."/>
            <person name="Watanabe S."/>
            <person name="Nomura N."/>
        </authorList>
    </citation>
    <scope>NUCLEOTIDE SEQUENCE [LARGE SCALE MRNA] (ISOFORM 1)</scope>
</reference>
<reference key="6">
    <citation type="journal article" date="2004" name="Nature">
        <title>The DNA sequence and biology of human chromosome 19.</title>
        <authorList>
            <person name="Grimwood J."/>
            <person name="Gordon L.A."/>
            <person name="Olsen A.S."/>
            <person name="Terry A."/>
            <person name="Schmutz J."/>
            <person name="Lamerdin J.E."/>
            <person name="Hellsten U."/>
            <person name="Goodstein D."/>
            <person name="Couronne O."/>
            <person name="Tran-Gyamfi M."/>
            <person name="Aerts A."/>
            <person name="Altherr M."/>
            <person name="Ashworth L."/>
            <person name="Bajorek E."/>
            <person name="Black S."/>
            <person name="Branscomb E."/>
            <person name="Caenepeel S."/>
            <person name="Carrano A.V."/>
            <person name="Caoile C."/>
            <person name="Chan Y.M."/>
            <person name="Christensen M."/>
            <person name="Cleland C.A."/>
            <person name="Copeland A."/>
            <person name="Dalin E."/>
            <person name="Dehal P."/>
            <person name="Denys M."/>
            <person name="Detter J.C."/>
            <person name="Escobar J."/>
            <person name="Flowers D."/>
            <person name="Fotopulos D."/>
            <person name="Garcia C."/>
            <person name="Georgescu A.M."/>
            <person name="Glavina T."/>
            <person name="Gomez M."/>
            <person name="Gonzales E."/>
            <person name="Groza M."/>
            <person name="Hammon N."/>
            <person name="Hawkins T."/>
            <person name="Haydu L."/>
            <person name="Ho I."/>
            <person name="Huang W."/>
            <person name="Israni S."/>
            <person name="Jett J."/>
            <person name="Kadner K."/>
            <person name="Kimball H."/>
            <person name="Kobayashi A."/>
            <person name="Larionov V."/>
            <person name="Leem S.-H."/>
            <person name="Lopez F."/>
            <person name="Lou Y."/>
            <person name="Lowry S."/>
            <person name="Malfatti S."/>
            <person name="Martinez D."/>
            <person name="McCready P.M."/>
            <person name="Medina C."/>
            <person name="Morgan J."/>
            <person name="Nelson K."/>
            <person name="Nolan M."/>
            <person name="Ovcharenko I."/>
            <person name="Pitluck S."/>
            <person name="Pollard M."/>
            <person name="Popkie A.P."/>
            <person name="Predki P."/>
            <person name="Quan G."/>
            <person name="Ramirez L."/>
            <person name="Rash S."/>
            <person name="Retterer J."/>
            <person name="Rodriguez A."/>
            <person name="Rogers S."/>
            <person name="Salamov A."/>
            <person name="Salazar A."/>
            <person name="She X."/>
            <person name="Smith D."/>
            <person name="Slezak T."/>
            <person name="Solovyev V."/>
            <person name="Thayer N."/>
            <person name="Tice H."/>
            <person name="Tsai M."/>
            <person name="Ustaszewska A."/>
            <person name="Vo N."/>
            <person name="Wagner M."/>
            <person name="Wheeler J."/>
            <person name="Wu K."/>
            <person name="Xie G."/>
            <person name="Yang J."/>
            <person name="Dubchak I."/>
            <person name="Furey T.S."/>
            <person name="DeJong P."/>
            <person name="Dickson M."/>
            <person name="Gordon D."/>
            <person name="Eichler E.E."/>
            <person name="Pennacchio L.A."/>
            <person name="Richardson P."/>
            <person name="Stubbs L."/>
            <person name="Rokhsar D.S."/>
            <person name="Myers R.M."/>
            <person name="Rubin E.M."/>
            <person name="Lucas S.M."/>
        </authorList>
    </citation>
    <scope>NUCLEOTIDE SEQUENCE [LARGE SCALE GENOMIC DNA]</scope>
</reference>
<reference key="7">
    <citation type="submission" date="2005-07" db="EMBL/GenBank/DDBJ databases">
        <authorList>
            <person name="Mural R.J."/>
            <person name="Istrail S."/>
            <person name="Sutton G.G."/>
            <person name="Florea L."/>
            <person name="Halpern A.L."/>
            <person name="Mobarry C.M."/>
            <person name="Lippert R."/>
            <person name="Walenz B."/>
            <person name="Shatkay H."/>
            <person name="Dew I."/>
            <person name="Miller J.R."/>
            <person name="Flanigan M.J."/>
            <person name="Edwards N.J."/>
            <person name="Bolanos R."/>
            <person name="Fasulo D."/>
            <person name="Halldorsson B.V."/>
            <person name="Hannenhalli S."/>
            <person name="Turner R."/>
            <person name="Yooseph S."/>
            <person name="Lu F."/>
            <person name="Nusskern D.R."/>
            <person name="Shue B.C."/>
            <person name="Zheng X.H."/>
            <person name="Zhong F."/>
            <person name="Delcher A.L."/>
            <person name="Huson D.H."/>
            <person name="Kravitz S.A."/>
            <person name="Mouchard L."/>
            <person name="Reinert K."/>
            <person name="Remington K.A."/>
            <person name="Clark A.G."/>
            <person name="Waterman M.S."/>
            <person name="Eichler E.E."/>
            <person name="Adams M.D."/>
            <person name="Hunkapiller M.W."/>
            <person name="Myers E.W."/>
            <person name="Venter J.C."/>
        </authorList>
    </citation>
    <scope>NUCLEOTIDE SEQUENCE [LARGE SCALE GENOMIC DNA]</scope>
</reference>
<reference key="8">
    <citation type="journal article" date="2004" name="Genome Res.">
        <title>The status, quality, and expansion of the NIH full-length cDNA project: the Mammalian Gene Collection (MGC).</title>
        <authorList>
            <consortium name="The MGC Project Team"/>
        </authorList>
    </citation>
    <scope>NUCLEOTIDE SEQUENCE [LARGE SCALE MRNA] (ISOFORM 1)</scope>
    <source>
        <tissue>Placenta</tissue>
    </source>
</reference>
<reference key="9">
    <citation type="journal article" date="1998" name="Nat. Biotechnol.">
        <title>Selection system for genes encoding nuclear-targeted proteins.</title>
        <authorList>
            <person name="Ueki N."/>
            <person name="Oda T."/>
            <person name="Kondo M."/>
            <person name="Yano K."/>
            <person name="Noguchi T."/>
            <person name="Muramatsu M.-A."/>
        </authorList>
    </citation>
    <scope>NUCLEOTIDE SEQUENCE [LARGE SCALE MRNA] OF 1-358 (ISOFORM 1)</scope>
    <scope>SUBCELLULAR LOCATION</scope>
    <source>
        <tissue>Fetal brain</tissue>
    </source>
</reference>
<reference key="10">
    <citation type="journal article" date="2000" name="J. Cell Sci.">
        <title>HA95 is a protein of the chromatin and nuclear matrix regulating nuclear envelope dynamics.</title>
        <authorList>
            <person name="Martins S.B."/>
            <person name="Eide T."/>
            <person name="Steen R.L."/>
            <person name="Jahnsen T."/>
            <person name="Skaalhegg B.S."/>
            <person name="Collas P."/>
        </authorList>
    </citation>
    <scope>FUNCTION</scope>
    <scope>INTERACTION WITH LAMIN-B</scope>
    <scope>SUBCELLULAR LOCATION</scope>
</reference>
<reference key="11">
    <citation type="journal article" date="2001" name="J. Biol. Chem.">
        <title>Mapping the functional domains of HAP95, a protein that binds RNA helicase A and activates the constitutive transport element of type D retroviruses.</title>
        <authorList>
            <person name="Yang J.P."/>
            <person name="Tang H."/>
            <person name="Reddy T.R."/>
            <person name="Wong-Staal F."/>
        </authorList>
    </citation>
    <scope>FUNCTION</scope>
    <scope>FUNCTION (MICROBIAL INFECTION)</scope>
    <scope>INTERACTION WITH DHX9</scope>
    <scope>NUCLEAR EXPORT SIGNAL</scope>
</reference>
<reference key="12">
    <citation type="journal article" date="2001" name="J. Virol.">
        <title>EBNA-LP associates with cellular proteins including DNA-PK and HA95.</title>
        <authorList>
            <person name="Han I."/>
            <person name="Harada S."/>
            <person name="Weaver D."/>
            <person name="Xue Y."/>
            <person name="Lane W."/>
            <person name="Orstavik S."/>
            <person name="Skalhegg B."/>
            <person name="Kieff E."/>
        </authorList>
    </citation>
    <scope>INTERACTION WITH EBNA-LP</scope>
</reference>
<reference key="13">
    <citation type="journal article" date="2002" name="Mol. Cell. Biol.">
        <title>Protein kinase A associates with HA95 and affects transcriptional coactivation by Epstein-Barr virus nuclear proteins.</title>
        <authorList>
            <person name="Han I."/>
            <person name="Xue Y."/>
            <person name="Harada S."/>
            <person name="Orstavik S."/>
            <person name="Skalhegg B."/>
            <person name="Kieff E."/>
        </authorList>
    </citation>
    <scope>INTERACTION WITH PRKACA</scope>
    <scope>FUNCTION (MICROBIAL INFECTION)</scope>
    <scope>SUBCELLULAR LOCATION</scope>
</reference>
<reference key="14">
    <citation type="journal article" date="2003" name="J. Cell Biol.">
        <title>HA95 and LAP2 beta mediate a novel chromatin-nuclear envelope interaction implicated in initiation of DNA replication.</title>
        <authorList>
            <person name="Martins S."/>
            <person name="Eikvar S."/>
            <person name="Furukawa K."/>
            <person name="Collas P."/>
        </authorList>
    </citation>
    <scope>INTERACTION WITH TMPO-BETA</scope>
    <scope>FUNCTION</scope>
</reference>
<reference key="15">
    <citation type="journal article" date="2003" name="Biochemistry">
        <title>In vitro modulation of the interaction between HA95 and LAP2beta by cAMP signaling.</title>
        <authorList>
            <person name="Martins S.B."/>
            <person name="Marstad A."/>
            <person name="Collas P."/>
        </authorList>
    </citation>
    <scope>PHOSPHORYLATION</scope>
</reference>
<reference key="16">
    <citation type="journal article" date="2005" name="NeuroMolecular Med.">
        <title>Interaction of the nuclear matrix protein NAKAP with HypA and huntingtin: implications for nuclear toxicity in Huntington's disease pathogenesis.</title>
        <authorList>
            <person name="Sayer J.A."/>
            <person name="Manczak M."/>
            <person name="Akileswaran L."/>
            <person name="Reddy P.H."/>
            <person name="Coghlan V.M."/>
        </authorList>
    </citation>
    <scope>INTERACTION WITH PRPF40A</scope>
    <scope>SUBCELLULAR LOCATION</scope>
    <scope>TISSUE SPECIFICITY</scope>
</reference>
<reference key="17">
    <citation type="journal article" date="2006" name="Genes Dev.">
        <title>A novel histone deacetylase pathway regulates mitosis by modulating Aurora B kinase activity.</title>
        <authorList>
            <person name="Li Y."/>
            <person name="Kao G.D."/>
            <person name="Garcia B.A."/>
            <person name="Shabanowitz J."/>
            <person name="Hunt D.F."/>
            <person name="Qin J."/>
            <person name="Phelan C."/>
            <person name="Lazar M.A."/>
        </authorList>
    </citation>
    <scope>FUNCTION</scope>
    <scope>INTERACTION WITH HDAC3</scope>
</reference>
<reference key="18">
    <citation type="journal article" date="2007" name="Exp. Cell Res.">
        <title>Involvement of the catalytic subunit of protein kinase A and of HA95 in pre-mRNA splicing.</title>
        <authorList>
            <person name="Kvissel A.K."/>
            <person name="Oerstavik S."/>
            <person name="Eikvar S."/>
            <person name="Brede G."/>
            <person name="Jahnsen T."/>
            <person name="Collas P."/>
            <person name="Akusjaervi G."/>
            <person name="Skaalhegg B.S."/>
        </authorList>
    </citation>
    <scope>FUNCTION</scope>
    <scope>SUBCELLULAR LOCATION</scope>
</reference>
<reference key="19">
    <citation type="journal article" date="2008" name="Exp. Cell Res.">
        <title>A cancer-associated RING finger protein, RNF43, is a ubiquitin ligase that interacts with a nuclear protein, HAP95.</title>
        <authorList>
            <person name="Sugiura T."/>
            <person name="Yamaguchi A."/>
            <person name="Miyamoto K."/>
        </authorList>
    </citation>
    <scope>INTERACTION WITH RNF43</scope>
</reference>
<reference key="20">
    <citation type="journal article" date="2008" name="Mol. Cell">
        <title>Kinase-selective enrichment enables quantitative phosphoproteomics of the kinome across the cell cycle.</title>
        <authorList>
            <person name="Daub H."/>
            <person name="Olsen J.V."/>
            <person name="Bairlein M."/>
            <person name="Gnad F."/>
            <person name="Oppermann F.S."/>
            <person name="Korner R."/>
            <person name="Greff Z."/>
            <person name="Keri G."/>
            <person name="Stemmann O."/>
            <person name="Mann M."/>
        </authorList>
    </citation>
    <scope>PHOSPHORYLATION [LARGE SCALE ANALYSIS] AT SER-283</scope>
    <scope>IDENTIFICATION BY MASS SPECTROMETRY [LARGE SCALE ANALYSIS]</scope>
    <source>
        <tissue>Cervix carcinoma</tissue>
    </source>
</reference>
<reference key="21">
    <citation type="journal article" date="2008" name="Proc. Natl. Acad. Sci. U.S.A.">
        <title>A quantitative atlas of mitotic phosphorylation.</title>
        <authorList>
            <person name="Dephoure N."/>
            <person name="Zhou C."/>
            <person name="Villen J."/>
            <person name="Beausoleil S.A."/>
            <person name="Bakalarski C.E."/>
            <person name="Elledge S.J."/>
            <person name="Gygi S.P."/>
        </authorList>
    </citation>
    <scope>PHOSPHORYLATION [LARGE SCALE ANALYSIS] AT THR-292 AND SER-297</scope>
    <scope>IDENTIFICATION BY MASS SPECTROMETRY [LARGE SCALE ANALYSIS]</scope>
    <source>
        <tissue>Cervix carcinoma</tissue>
    </source>
</reference>
<reference key="22">
    <citation type="journal article" date="2009" name="Science">
        <title>Lysine acetylation targets protein complexes and co-regulates major cellular functions.</title>
        <authorList>
            <person name="Choudhary C."/>
            <person name="Kumar C."/>
            <person name="Gnad F."/>
            <person name="Nielsen M.L."/>
            <person name="Rehman M."/>
            <person name="Walther T.C."/>
            <person name="Olsen J.V."/>
            <person name="Mann M."/>
        </authorList>
    </citation>
    <scope>ACETYLATION [LARGE SCALE ANALYSIS] AT LYS-257</scope>
    <scope>IDENTIFICATION BY MASS SPECTROMETRY [LARGE SCALE ANALYSIS]</scope>
</reference>
<reference key="23">
    <citation type="journal article" date="2010" name="Sci. Signal.">
        <title>Quantitative phosphoproteomics reveals widespread full phosphorylation site occupancy during mitosis.</title>
        <authorList>
            <person name="Olsen J.V."/>
            <person name="Vermeulen M."/>
            <person name="Santamaria A."/>
            <person name="Kumar C."/>
            <person name="Miller M.L."/>
            <person name="Jensen L.J."/>
            <person name="Gnad F."/>
            <person name="Cox J."/>
            <person name="Jensen T.S."/>
            <person name="Nigg E.A."/>
            <person name="Brunak S."/>
            <person name="Mann M."/>
        </authorList>
    </citation>
    <scope>PHOSPHORYLATION [LARGE SCALE ANALYSIS] AT SER-283</scope>
    <scope>IDENTIFICATION BY MASS SPECTROMETRY [LARGE SCALE ANALYSIS]</scope>
    <source>
        <tissue>Cervix carcinoma</tissue>
    </source>
</reference>
<reference key="24">
    <citation type="journal article" date="2013" name="J. Proteome Res.">
        <title>Toward a comprehensive characterization of a human cancer cell phosphoproteome.</title>
        <authorList>
            <person name="Zhou H."/>
            <person name="Di Palma S."/>
            <person name="Preisinger C."/>
            <person name="Peng M."/>
            <person name="Polat A.N."/>
            <person name="Heck A.J."/>
            <person name="Mohammed S."/>
        </authorList>
    </citation>
    <scope>PHOSPHORYLATION [LARGE SCALE ANALYSIS] AT THR-267 AND SER-552</scope>
    <scope>IDENTIFICATION BY MASS SPECTROMETRY [LARGE SCALE ANALYSIS]</scope>
    <source>
        <tissue>Erythroleukemia</tissue>
    </source>
</reference>
<reference key="25">
    <citation type="journal article" date="2014" name="Mol. Cell. Proteomics">
        <title>Immunoaffinity enrichment and mass spectrometry analysis of protein methylation.</title>
        <authorList>
            <person name="Guo A."/>
            <person name="Gu H."/>
            <person name="Zhou J."/>
            <person name="Mulhern D."/>
            <person name="Wang Y."/>
            <person name="Lee K.A."/>
            <person name="Yang V."/>
            <person name="Aguiar M."/>
            <person name="Kornhauser J."/>
            <person name="Jia X."/>
            <person name="Ren J."/>
            <person name="Beausoleil S.A."/>
            <person name="Silva J.C."/>
            <person name="Vemulapalli V."/>
            <person name="Bedford M.T."/>
            <person name="Comb M.J."/>
        </authorList>
    </citation>
    <scope>METHYLATION [LARGE SCALE ANALYSIS] AT ARG-208; ARG-217; ARG-237 AND ARG-247</scope>
    <scope>IDENTIFICATION BY MASS SPECTROMETRY [LARGE SCALE ANALYSIS]</scope>
    <source>
        <tissue>Colon carcinoma</tissue>
    </source>
</reference>
<reference key="26">
    <citation type="journal article" date="2014" name="Retrovirology">
        <title>The role of A-kinase anchoring protein 95-like protein in annealing of tRNALys3 to HIV-1 RNA.</title>
        <authorList>
            <person name="Xing L."/>
            <person name="Zhao X."/>
            <person name="Guo F."/>
            <person name="Kleiman L."/>
        </authorList>
    </citation>
    <scope>FUNCTION (MICROBIAL INFECTION)</scope>
    <scope>INTERACTION WITH HIV-1 REVERSE TRANSCRIPTASE/RIBONUCLEASE H</scope>
</reference>
<reference key="27">
    <citation type="journal article" date="2011" name="BMC Syst. Biol.">
        <title>Initial characterization of the human central proteome.</title>
        <authorList>
            <person name="Burkard T.R."/>
            <person name="Planyavsky M."/>
            <person name="Kaupe I."/>
            <person name="Breitwieser F.P."/>
            <person name="Buerckstuemmer T."/>
            <person name="Bennett K.L."/>
            <person name="Superti-Furga G."/>
            <person name="Colinge J."/>
        </authorList>
    </citation>
    <scope>IDENTIFICATION BY MASS SPECTROMETRY [LARGE SCALE ANALYSIS]</scope>
</reference>
<evidence type="ECO:0000255" key="1"/>
<evidence type="ECO:0000255" key="2">
    <source>
        <dbReference type="PROSITE-ProRule" id="PRU01140"/>
    </source>
</evidence>
<evidence type="ECO:0000256" key="3">
    <source>
        <dbReference type="SAM" id="MobiDB-lite"/>
    </source>
</evidence>
<evidence type="ECO:0000269" key="4">
    <source>
    </source>
</evidence>
<evidence type="ECO:0000269" key="5">
    <source>
    </source>
</evidence>
<evidence type="ECO:0000269" key="6">
    <source>
    </source>
</evidence>
<evidence type="ECO:0000269" key="7">
    <source>
    </source>
</evidence>
<evidence type="ECO:0000269" key="8">
    <source>
    </source>
</evidence>
<evidence type="ECO:0000269" key="9">
    <source>
    </source>
</evidence>
<evidence type="ECO:0000269" key="10">
    <source>
    </source>
</evidence>
<evidence type="ECO:0000269" key="11">
    <source>
    </source>
</evidence>
<evidence type="ECO:0000269" key="12">
    <source>
    </source>
</evidence>
<evidence type="ECO:0000269" key="13">
    <source>
    </source>
</evidence>
<evidence type="ECO:0000269" key="14">
    <source>
    </source>
</evidence>
<evidence type="ECO:0000269" key="15">
    <source>
    </source>
</evidence>
<evidence type="ECO:0000269" key="16">
    <source>
    </source>
</evidence>
<evidence type="ECO:0000269" key="17">
    <source>
    </source>
</evidence>
<evidence type="ECO:0000303" key="18">
    <source>
    </source>
</evidence>
<evidence type="ECO:0000305" key="19"/>
<evidence type="ECO:0000305" key="20">
    <source>
    </source>
</evidence>
<evidence type="ECO:0007744" key="21">
    <source>
    </source>
</evidence>
<evidence type="ECO:0007744" key="22">
    <source>
    </source>
</evidence>
<evidence type="ECO:0007744" key="23">
    <source>
    </source>
</evidence>
<evidence type="ECO:0007744" key="24">
    <source>
    </source>
</evidence>
<evidence type="ECO:0007744" key="25">
    <source>
    </source>
</evidence>
<evidence type="ECO:0007744" key="26">
    <source>
    </source>
</evidence>
<gene>
    <name type="primary">AKAP8L</name>
    <name type="synonym">NAKAP</name>
    <name type="synonym">NAKAP95</name>
    <name type="ORF">HRIHFB2018</name>
</gene>
<comment type="function">
    <text evidence="5 7 9 10 11 14 20">Could play a role in constitutive transport element (CTE)-mediated gene expression by association with DHX9. Increases CTE-dependent nuclear unspliced mRNA export (PubMed:10748171, PubMed:11402034). Proposed to target PRKACA to the nucleus but does not seem to be implicated in the binding of regulatory subunit II of PKA (PubMed:10761695, PubMed:11884601). May be involved in nuclear envelope breakdown and chromatin condensation. May be involved in anchoring nuclear membranes to chromatin in interphase and in releasing membranes from chromating at mitosis (PubMed:11034899). May regulate the initiation phase of DNA replication when associated with TMPO isoform Beta (PubMed:12538639). Required for cell cycle G2/M transition and histone deacetylation during mitosis. In mitotic cells recruits HDAC3 to the vicinity of chromatin leading to deacetylation and subsequent phosphorylation at 'Ser-10' of histone H3; in this function seems to act redundantly with AKAP8 (PubMed:16980585). May be involved in regulation of pre-mRNA splicing (PubMed:17594903).</text>
</comment>
<comment type="function">
    <text evidence="10">(Microbial infection) In case of EBV infection, may target PRKACA to EBNA-LP-containing nuclear sites to modulate transcription from specific promoters.</text>
</comment>
<comment type="function">
    <text evidence="9">(Microbial infection) Can synergize with DHX9 to activate the CTE-mediated gene expression of type D retroviruses.</text>
</comment>
<comment type="function">
    <text evidence="17">(Microbial infection) In case of HIV-1 infection, involved in the DHX9-promoted annealing of host tRNA(Lys3) to viral genomic RNA as a primer in reverse transcription; in vitro negatively regulates DHX9 annealing activity.</text>
</comment>
<comment type="subunit">
    <text evidence="5 8 9 11 13 14 16 17">Interacts (via N-terminus) with DHX9 (via RGG region) (PubMed:10748171, PubMed:11402034). Interacts with TMPO isoform Beta, PRPF40A, RNF43, lamin-B (PubMed:11034899, PubMed:12538639, PubMed:16391387, PubMed:18313049). Interacts with HDAC3; increased during mitosis (PubMed:16980585). Interacts with EBV EBNA-LP (PubMed:11160753). Interacts with HIV-1 reverse transcriptase/ribonuclease H (PubMed:25034436).</text>
</comment>
<comment type="interaction">
    <interactant intactId="EBI-357530">
        <id>Q9ULX6</id>
    </interactant>
    <interactant intactId="EBI-11096309">
        <id>Q9NYB9-2</id>
        <label>ABI2</label>
    </interactant>
    <organismsDiffer>false</organismsDiffer>
    <experiments>3</experiments>
</comment>
<comment type="interaction">
    <interactant intactId="EBI-357530">
        <id>Q9ULX6</id>
    </interactant>
    <interactant intactId="EBI-745689">
        <id>Q7L5A3</id>
        <label>ATOSB</label>
    </interactant>
    <organismsDiffer>false</organismsDiffer>
    <experiments>3</experiments>
</comment>
<comment type="interaction">
    <interactant intactId="EBI-357530">
        <id>Q9ULX6</id>
    </interactant>
    <interactant intactId="EBI-1166928">
        <id>Q8N5M1</id>
        <label>ATPAF2</label>
    </interactant>
    <organismsDiffer>false</organismsDiffer>
    <experiments>3</experiments>
</comment>
<comment type="interaction">
    <interactant intactId="EBI-357530">
        <id>Q9ULX6</id>
    </interactant>
    <interactant intactId="EBI-718719">
        <id>Q9Y2V2</id>
        <label>CARHSP1</label>
    </interactant>
    <organismsDiffer>false</organismsDiffer>
    <experiments>3</experiments>
</comment>
<comment type="interaction">
    <interactant intactId="EBI-357530">
        <id>Q9ULX6</id>
    </interactant>
    <interactant intactId="EBI-744545">
        <id>Q8NEC5</id>
        <label>CATSPER1</label>
    </interactant>
    <organismsDiffer>false</organismsDiffer>
    <experiments>3</experiments>
</comment>
<comment type="interaction">
    <interactant intactId="EBI-357530">
        <id>Q9ULX6</id>
    </interactant>
    <interactant intactId="EBI-744556">
        <id>Q96HB5</id>
        <label>CCDC120</label>
    </interactant>
    <organismsDiffer>false</organismsDiffer>
    <experiments>3</experiments>
</comment>
<comment type="interaction">
    <interactant intactId="EBI-357530">
        <id>Q9ULX6</id>
    </interactant>
    <interactant intactId="EBI-1104933">
        <id>Q8N4L8</id>
        <label>CCDC24</label>
    </interactant>
    <organismsDiffer>false</organismsDiffer>
    <experiments>3</experiments>
</comment>
<comment type="interaction">
    <interactant intactId="EBI-357530">
        <id>Q9ULX6</id>
    </interactant>
    <interactant intactId="EBI-741032">
        <id>Q8NE01</id>
        <label>CNNM3</label>
    </interactant>
    <organismsDiffer>false</organismsDiffer>
    <experiments>3</experiments>
</comment>
<comment type="interaction">
    <interactant intactId="EBI-357530">
        <id>Q9ULX6</id>
    </interactant>
    <interactant intactId="EBI-10192698">
        <id>Q02930-3</id>
        <label>CREB5</label>
    </interactant>
    <organismsDiffer>false</organismsDiffer>
    <experiments>3</experiments>
</comment>
<comment type="interaction">
    <interactant intactId="EBI-357530">
        <id>Q9ULX6</id>
    </interactant>
    <interactant intactId="EBI-711360">
        <id>P33240</id>
        <label>CSTF2</label>
    </interactant>
    <organismsDiffer>false</organismsDiffer>
    <experiments>3</experiments>
</comment>
<comment type="interaction">
    <interactant intactId="EBI-357530">
        <id>Q9ULX6</id>
    </interactant>
    <interactant intactId="EBI-747012">
        <id>Q9H0L4</id>
        <label>CSTF2T</label>
    </interactant>
    <organismsDiffer>false</organismsDiffer>
    <experiments>3</experiments>
</comment>
<comment type="interaction">
    <interactant intactId="EBI-357530">
        <id>Q9ULX6</id>
    </interactant>
    <interactant intactId="EBI-12206931">
        <id>Q14129</id>
        <label>DGCR6</label>
    </interactant>
    <organismsDiffer>false</organismsDiffer>
    <experiments>3</experiments>
</comment>
<comment type="interaction">
    <interactant intactId="EBI-357530">
        <id>Q9ULX6</id>
    </interactant>
    <interactant intactId="EBI-9679045">
        <id>Q9NQL9</id>
        <label>DMRT3</label>
    </interactant>
    <organismsDiffer>false</organismsDiffer>
    <experiments>3</experiments>
</comment>
<comment type="interaction">
    <interactant intactId="EBI-357530">
        <id>Q9ULX6</id>
    </interactant>
    <interactant intactId="EBI-744099">
        <id>Q9H0I2</id>
        <label>ENKD1</label>
    </interactant>
    <organismsDiffer>false</organismsDiffer>
    <experiments>3</experiments>
</comment>
<comment type="interaction">
    <interactant intactId="EBI-357530">
        <id>Q9ULX6</id>
    </interactant>
    <interactant intactId="EBI-2807642">
        <id>Q8WU58</id>
        <label>FAM222B</label>
    </interactant>
    <organismsDiffer>false</organismsDiffer>
    <experiments>3</experiments>
</comment>
<comment type="interaction">
    <interactant intactId="EBI-357530">
        <id>Q9ULX6</id>
    </interactant>
    <interactant intactId="EBI-11317801">
        <id>Q12950</id>
        <label>FOXD4</label>
    </interactant>
    <organismsDiffer>false</organismsDiffer>
    <experiments>3</experiments>
</comment>
<comment type="interaction">
    <interactant intactId="EBI-357530">
        <id>Q9ULX6</id>
    </interactant>
    <interactant intactId="EBI-725515">
        <id>O43559</id>
        <label>FRS3</label>
    </interactant>
    <organismsDiffer>false</organismsDiffer>
    <experiments>3</experiments>
</comment>
<comment type="interaction">
    <interactant intactId="EBI-357530">
        <id>Q9ULX6</id>
    </interactant>
    <interactant intactId="EBI-751540">
        <id>O95872</id>
        <label>GPANK1</label>
    </interactant>
    <organismsDiffer>false</organismsDiffer>
    <experiments>3</experiments>
</comment>
<comment type="interaction">
    <interactant intactId="EBI-357530">
        <id>Q9ULX6</id>
    </interactant>
    <interactant intactId="EBI-713355">
        <id>Q13227</id>
        <label>GPS2</label>
    </interactant>
    <organismsDiffer>false</organismsDiffer>
    <experiments>3</experiments>
</comment>
<comment type="interaction">
    <interactant intactId="EBI-357530">
        <id>Q9ULX6</id>
    </interactant>
    <interactant intactId="EBI-607682">
        <id>O15379</id>
        <label>HDAC3</label>
    </interactant>
    <organismsDiffer>false</organismsDiffer>
    <experiments>5</experiments>
</comment>
<comment type="interaction">
    <interactant intactId="EBI-357530">
        <id>Q9ULX6</id>
    </interactant>
    <interactant intactId="EBI-10329202">
        <id>Q9Y5R4</id>
        <label>HEMK1</label>
    </interactant>
    <organismsDiffer>false</organismsDiffer>
    <experiments>3</experiments>
</comment>
<comment type="interaction">
    <interactant intactId="EBI-357530">
        <id>Q9ULX6</id>
    </interactant>
    <interactant intactId="EBI-740220">
        <id>O14964</id>
        <label>HGS</label>
    </interactant>
    <organismsDiffer>false</organismsDiffer>
    <experiments>3</experiments>
</comment>
<comment type="interaction">
    <interactant intactId="EBI-357530">
        <id>Q9ULX6</id>
    </interactant>
    <interactant intactId="EBI-12056251">
        <id>Q9ULV5-2</id>
        <label>HSF4</label>
    </interactant>
    <organismsDiffer>false</organismsDiffer>
    <experiments>3</experiments>
</comment>
<comment type="interaction">
    <interactant intactId="EBI-357530">
        <id>Q9ULX6</id>
    </interactant>
    <interactant intactId="EBI-6509505">
        <id>Q0VD86</id>
        <label>INCA1</label>
    </interactant>
    <organismsDiffer>false</organismsDiffer>
    <experiments>3</experiments>
</comment>
<comment type="interaction">
    <interactant intactId="EBI-357530">
        <id>Q9ULX6</id>
    </interactant>
    <interactant intactId="EBI-10981970">
        <id>Q5T749</id>
        <label>KPRP</label>
    </interactant>
    <organismsDiffer>false</organismsDiffer>
    <experiments>3</experiments>
</comment>
<comment type="interaction">
    <interactant intactId="EBI-357530">
        <id>Q9ULX6</id>
    </interactant>
    <interactant intactId="EBI-1052105">
        <id>Q14657</id>
        <label>LAGE3</label>
    </interactant>
    <organismsDiffer>false</organismsDiffer>
    <experiments>3</experiments>
</comment>
<comment type="interaction">
    <interactant intactId="EBI-357530">
        <id>Q9ULX6</id>
    </interactant>
    <interactant intactId="EBI-11603426">
        <id>Q8TAP9</id>
        <label>MPLKIP</label>
    </interactant>
    <organismsDiffer>false</organismsDiffer>
    <experiments>3</experiments>
</comment>
<comment type="interaction">
    <interactant intactId="EBI-357530">
        <id>Q9ULX6</id>
    </interactant>
    <interactant intactId="EBI-744402">
        <id>Q9NP98</id>
        <label>MYOZ1</label>
    </interactant>
    <organismsDiffer>false</organismsDiffer>
    <experiments>3</experiments>
</comment>
<comment type="interaction">
    <interactant intactId="EBI-357530">
        <id>Q9ULX6</id>
    </interactant>
    <interactant intactId="EBI-2858213">
        <id>Q86VE0</id>
        <label>MYPOP</label>
    </interactant>
    <organismsDiffer>false</organismsDiffer>
    <experiments>3</experiments>
</comment>
<comment type="interaction">
    <interactant intactId="EBI-357530">
        <id>Q9ULX6</id>
    </interactant>
    <interactant intactId="EBI-11022007">
        <id>Q9HBE1-4</id>
        <label>PATZ1</label>
    </interactant>
    <organismsDiffer>false</organismsDiffer>
    <experiments>3</experiments>
</comment>
<comment type="interaction">
    <interactant intactId="EBI-357530">
        <id>Q9ULX6</id>
    </interactant>
    <interactant intactId="EBI-10329013">
        <id>Q9Y5E9</id>
        <label>PCDHB14</label>
    </interactant>
    <organismsDiffer>false</organismsDiffer>
    <experiments>3</experiments>
</comment>
<comment type="interaction">
    <interactant intactId="EBI-357530">
        <id>Q9ULX6</id>
    </interactant>
    <interactant intactId="EBI-724639">
        <id>Q9UBV8</id>
        <label>PEF1</label>
    </interactant>
    <organismsDiffer>false</organismsDiffer>
    <experiments>3</experiments>
</comment>
<comment type="interaction">
    <interactant intactId="EBI-357530">
        <id>Q9ULX6</id>
    </interactant>
    <interactant intactId="EBI-748265">
        <id>P78337</id>
        <label>PITX1</label>
    </interactant>
    <organismsDiffer>false</organismsDiffer>
    <experiments>3</experiments>
</comment>
<comment type="interaction">
    <interactant intactId="EBI-357530">
        <id>Q9ULX6</id>
    </interactant>
    <interactant intactId="EBI-602382">
        <id>Q16512</id>
        <label>PKN1</label>
    </interactant>
    <organismsDiffer>false</organismsDiffer>
    <experiments>3</experiments>
</comment>
<comment type="interaction">
    <interactant intactId="EBI-357530">
        <id>Q9ULX6</id>
    </interactant>
    <interactant intactId="EBI-12014286">
        <id>Q494U1-3</id>
        <label>PLEKHN1</label>
    </interactant>
    <organismsDiffer>false</organismsDiffer>
    <experiments>3</experiments>
</comment>
<comment type="interaction">
    <interactant intactId="EBI-357530">
        <id>Q9ULX6</id>
    </interactant>
    <interactant intactId="EBI-1383852">
        <id>P54646</id>
        <label>PRKAA2</label>
    </interactant>
    <organismsDiffer>false</organismsDiffer>
    <experiments>3</experiments>
</comment>
<comment type="interaction">
    <interactant intactId="EBI-357530">
        <id>Q9ULX6</id>
    </interactant>
    <interactant intactId="EBI-696162">
        <id>P60484</id>
        <label>PTEN</label>
    </interactant>
    <organismsDiffer>false</organismsDiffer>
    <experiments>2</experiments>
</comment>
<comment type="interaction">
    <interactant intactId="EBI-357530">
        <id>Q9ULX6</id>
    </interactant>
    <interactant intactId="EBI-744023">
        <id>Q9BTL3</id>
        <label>RAMAC</label>
    </interactant>
    <organismsDiffer>false</organismsDiffer>
    <experiments>3</experiments>
</comment>
<comment type="interaction">
    <interactant intactId="EBI-357530">
        <id>Q9ULX6</id>
    </interactant>
    <interactant intactId="EBI-1647060">
        <id>Q68DV7</id>
        <label>RNF43</label>
    </interactant>
    <organismsDiffer>false</organismsDiffer>
    <experiments>2</experiments>
</comment>
<comment type="interaction">
    <interactant intactId="EBI-357530">
        <id>Q9ULX6</id>
    </interactant>
    <interactant intactId="EBI-10217913">
        <id>Q14D33</id>
        <label>RTP5</label>
    </interactant>
    <organismsDiffer>false</organismsDiffer>
    <experiments>3</experiments>
</comment>
<comment type="interaction">
    <interactant intactId="EBI-357530">
        <id>Q9ULX6</id>
    </interactant>
    <interactant intactId="EBI-6257312">
        <id>Q9BVN2</id>
        <label>RUSC1</label>
    </interactant>
    <organismsDiffer>false</organismsDiffer>
    <experiments>3</experiments>
</comment>
<comment type="interaction">
    <interactant intactId="EBI-357530">
        <id>Q9ULX6</id>
    </interactant>
    <interactant intactId="EBI-11986417">
        <id>Q9UPU9-3</id>
        <label>SAMD4A</label>
    </interactant>
    <organismsDiffer>false</organismsDiffer>
    <experiments>3</experiments>
</comment>
<comment type="interaction">
    <interactant intactId="EBI-357530">
        <id>Q9ULX6</id>
    </interactant>
    <interactant intactId="EBI-3957636">
        <id>Q8IYX7</id>
        <label>SAXO1</label>
    </interactant>
    <organismsDiffer>false</organismsDiffer>
    <experiments>3</experiments>
</comment>
<comment type="interaction">
    <interactant intactId="EBI-357530">
        <id>Q9ULX6</id>
    </interactant>
    <interactant intactId="EBI-12000762">
        <id>Q7Z5V6-2</id>
        <label>SAXO4</label>
    </interactant>
    <organismsDiffer>false</organismsDiffer>
    <experiments>3</experiments>
</comment>
<comment type="interaction">
    <interactant intactId="EBI-357530">
        <id>Q9ULX6</id>
    </interactant>
    <interactant intactId="EBI-2130111">
        <id>Q8TEC5</id>
        <label>SH3RF2</label>
    </interactant>
    <organismsDiffer>false</organismsDiffer>
    <experiments>3</experiments>
</comment>
<comment type="interaction">
    <interactant intactId="EBI-357530">
        <id>Q9ULX6</id>
    </interactant>
    <interactant intactId="EBI-766589">
        <id>P09234</id>
        <label>SNRPC</label>
    </interactant>
    <organismsDiffer>false</organismsDiffer>
    <experiments>4</experiments>
</comment>
<comment type="interaction">
    <interactant intactId="EBI-357530">
        <id>Q9ULX6</id>
    </interactant>
    <interactant intactId="EBI-750487">
        <id>Q8WW24</id>
        <label>TEKT4</label>
    </interactant>
    <organismsDiffer>false</organismsDiffer>
    <experiments>3</experiments>
</comment>
<comment type="interaction">
    <interactant intactId="EBI-357530">
        <id>Q9ULX6</id>
    </interactant>
    <interactant intactId="EBI-10239812">
        <id>Q96M29</id>
        <label>TEKT5</label>
    </interactant>
    <organismsDiffer>false</organismsDiffer>
    <experiments>3</experiments>
</comment>
<comment type="interaction">
    <interactant intactId="EBI-357530">
        <id>Q9ULX6</id>
    </interactant>
    <interactant intactId="EBI-752030">
        <id>Q96A09</id>
        <label>TENT5B</label>
    </interactant>
    <organismsDiffer>false</organismsDiffer>
    <experiments>3</experiments>
</comment>
<comment type="interaction">
    <interactant intactId="EBI-357530">
        <id>Q9ULX6</id>
    </interactant>
    <interactant intactId="EBI-11952651">
        <id>Q7Z6R9</id>
        <label>TFAP2D</label>
    </interactant>
    <organismsDiffer>false</organismsDiffer>
    <experiments>3</experiments>
</comment>
<comment type="interaction">
    <interactant intactId="EBI-357530">
        <id>Q9ULX6</id>
    </interactant>
    <interactant intactId="EBI-11064654">
        <id>Q01085-2</id>
        <label>TIAL1</label>
    </interactant>
    <organismsDiffer>false</organismsDiffer>
    <experiments>3</experiments>
</comment>
<comment type="interaction">
    <interactant intactId="EBI-357530">
        <id>Q9ULX6</id>
    </interactant>
    <interactant intactId="EBI-11741437">
        <id>Q08117-2</id>
        <label>TLE5</label>
    </interactant>
    <organismsDiffer>false</organismsDiffer>
    <experiments>3</experiments>
</comment>
<comment type="interaction">
    <interactant intactId="EBI-357530">
        <id>Q9ULX6</id>
    </interactant>
    <interactant intactId="EBI-712598">
        <id>P62328</id>
        <label>TMSB4X</label>
    </interactant>
    <organismsDiffer>false</organismsDiffer>
    <experiments>3</experiments>
</comment>
<comment type="interaction">
    <interactant intactId="EBI-357530">
        <id>Q9ULX6</id>
    </interactant>
    <interactant intactId="EBI-492476">
        <id>Q96RU7</id>
        <label>TRIB3</label>
    </interactant>
    <organismsDiffer>false</organismsDiffer>
    <experiments>3</experiments>
</comment>
<comment type="interaction">
    <interactant intactId="EBI-357530">
        <id>Q9ULX6</id>
    </interactant>
    <interactant intactId="EBI-10241197">
        <id>Q3SY00</id>
        <label>TSGA10IP</label>
    </interactant>
    <organismsDiffer>false</organismsDiffer>
    <experiments>3</experiments>
</comment>
<comment type="interaction">
    <interactant intactId="EBI-357530">
        <id>Q9ULX6</id>
    </interactant>
    <interactant intactId="EBI-1383454">
        <id>P29597</id>
        <label>TYK2</label>
    </interactant>
    <organismsDiffer>false</organismsDiffer>
    <experiments>3</experiments>
</comment>
<comment type="interaction">
    <interactant intactId="EBI-357530">
        <id>Q9ULX6</id>
    </interactant>
    <interactant intactId="EBI-12032042">
        <id>Q64LD2-2</id>
        <label>WDR25</label>
    </interactant>
    <organismsDiffer>false</organismsDiffer>
    <experiments>3</experiments>
</comment>
<comment type="interaction">
    <interactant intactId="EBI-357530">
        <id>Q9ULX6</id>
    </interactant>
    <interactant intactId="EBI-11963196">
        <id>Q15915</id>
        <label>ZIC1</label>
    </interactant>
    <organismsDiffer>false</organismsDiffer>
    <experiments>3</experiments>
</comment>
<comment type="interaction">
    <interactant intactId="EBI-357530">
        <id>Q9ULX6</id>
    </interactant>
    <interactant intactId="EBI-2813661">
        <id>Q8N895</id>
        <label>ZNF366</label>
    </interactant>
    <organismsDiffer>false</organismsDiffer>
    <experiments>3</experiments>
</comment>
<comment type="interaction">
    <interactant intactId="EBI-357530">
        <id>Q9ULX6</id>
    </interactant>
    <interactant intactId="EBI-3925400">
        <id>A8K8V0</id>
        <label>ZNF785</label>
    </interactant>
    <organismsDiffer>false</organismsDiffer>
    <experiments>3</experiments>
</comment>
<comment type="interaction">
    <interactant intactId="EBI-357530">
        <id>Q9ULX6</id>
    </interactant>
    <interactant intactId="EBI-645554">
        <id>Q9R1C7</id>
        <label>Prpf40a</label>
    </interactant>
    <organismsDiffer>true</organismsDiffer>
    <experiments>3</experiments>
</comment>
<comment type="interaction">
    <interactant intactId="EBI-357530">
        <id>Q9ULX6</id>
    </interactant>
    <interactant intactId="EBI-8826747">
        <id>PRO_0000308465</id>
        <dbReference type="UniProtKB" id="P29991"/>
    </interactant>
    <organismsDiffer>true</organismsDiffer>
    <experiments>3</experiments>
</comment>
<comment type="subcellular location">
    <subcellularLocation>
        <location evidence="5 6">Nucleus</location>
    </subcellularLocation>
    <subcellularLocation>
        <location evidence="7 13">Nucleus matrix</location>
    </subcellularLocation>
    <subcellularLocation>
        <location evidence="15">Nucleus speckle</location>
    </subcellularLocation>
    <subcellularLocation>
        <location evidence="10">Nucleus</location>
        <location evidence="10">PML body</location>
    </subcellularLocation>
    <subcellularLocation>
        <location evidence="5">Cytoplasm</location>
    </subcellularLocation>
    <text evidence="5 7 10 13">Colocalizes with PRPF40A in the nuclear matrix (PubMed:16391387). Nuclear at steady state but shuttles between the nucleus and cytoplasm (PubMed:10748171). The shuttling property has been questioned (PubMed:11034899). Colocalizes with EBNA-LP in PML bodies (PubMed:11884601).</text>
</comment>
<comment type="alternative products">
    <event type="alternative splicing"/>
    <isoform>
        <id>Q9ULX6-1</id>
        <name>1</name>
        <sequence type="displayed"/>
    </isoform>
    <isoform>
        <id>Q9ULX6-2</id>
        <name>2</name>
        <sequence type="described" ref="VSP_044426"/>
    </isoform>
</comment>
<comment type="tissue specificity">
    <text evidence="4 13">Ubiquitously expressed. Expressed in the brain cortex (at protein level).</text>
</comment>
<comment type="PTM">
    <text evidence="12">Phosphorylated on serine or threonine residues possibly by PKA; probably modulating the interaction with TMPO isoform Beta.</text>
</comment>
<comment type="similarity">
    <text evidence="2">Belongs to the AKAP95 family.</text>
</comment>
<comment type="sequence caution" evidence="19">
    <conflict type="frameshift">
        <sequence resource="EMBL-CDS" id="AAF86048"/>
    </conflict>
</comment>
<comment type="sequence caution" evidence="19">
    <conflict type="erroneous initiation">
        <sequence resource="EMBL-CDS" id="BAA34791"/>
    </conflict>
    <text>Extended N-terminus.</text>
</comment>
<protein>
    <recommendedName>
        <fullName>A-kinase anchor protein 8-like</fullName>
        <shortName>AKAP8-like protein</shortName>
    </recommendedName>
    <alternativeName>
        <fullName>Helicase A-binding protein 95</fullName>
        <shortName>HAP95</shortName>
    </alternativeName>
    <alternativeName>
        <fullName>Homologous to AKAP95 protein</fullName>
        <shortName>HA95</shortName>
    </alternativeName>
    <alternativeName>
        <fullName>Neighbor of A-kinase-anchoring protein 95</fullName>
        <shortName>Neighbor of AKAP95</shortName>
    </alternativeName>
</protein>
<sequence>MSYTGFVQGSETTLQSTYSDTSAQPTCDYGYGTWNSGTNRGYEGYGYGYGYGQDNTTNYGYGMATSHSWEMPSSDTNANTSASGSASADSVLSRINQRLDMVPHLETDMMQGGVYGSGGERYDSYESCDSRAVLSERDLYRSGYDYSELDPEMEMAYEGQYDAYRDQFRMRGNDTFGPRAQGWARDARSGRPMASGYGRMWEDPMGARGQCMSGASRLPSLFSQNIIPEYGMFQGMRGGGAFPGGSRFGFGFGNGMKQMRRTWKTWTTADFRTKKKKRKQGGSPDEPDSKATRTDCSDNSDSDNDEGTEGEATEGLEGTEAVEKGSRVDGEDEEGKEDGREEGKEDPEKGALTTQDENGQTKRKLQAGKKSQDKQKKRQRDRMVERIQFVCSLCKYRTFYEDEMASHLDSKFHKEHFKYVGTKLPKQTADFLQEYVTNKTKKTEELRKTVEDLDGLIQQIYRDQDLTQEIAMEHFVKKVEAAHCAACDLFIPMQFGIIQKHLKTMDHNRNRRLMMEQSKKSSLMVARSILNNKLISKKLERYLKGENPFTDSPEEEKEQEEAEGGALDEGAQGEAAGISEGAEGVPAQPPVPPEPAPGAVSPPPPPPPEEEEEGAVPLLGGALQRQIRGIPGLDVEDDEEGGGGAP</sequence>